<sequence length="1216" mass="135124">MERLATVRARLQEWERAFARLHGRRPAKGDVEAAPEETRALYREYRNLKQAVRQADDRHRVLEQSLAEAAEEAQEPSCWGPHLSRAATQNTQSMPKQSLLSSVQDYGKRLKANLKNTTQTGPTQSRKLQLQKRSLSTVPAPRPPGSKTESPCPDEADDALPRVPEPRPRLGQLQQLRSSLSRRLTSLDPGWLERCHNRVSDLLEVPGACGLDLSAEESQPQMSGKVNIADPDIQSEVSVQSPEAIAQQPAQVLSQSPKSINSKGRKRKWNEKGEDFAQDQPSSGAGPLSEGARATVHGQDPPGEPTQVNVPQPCNSSNQARTEKAKGTTHLHASPRPASLDRGNYIRLNMKNKRFVRVGANRGRLLRKQVWKQKWKKKQAAFGGSGPRATDKDTCFRCGQFGHWASQCSQPGPTLTVQEEGDRDDKQPISTLEEVAQRTGTASCHHSGEETQPAAPELQVPHCPTPMSPLYPPGPLGQVAETPAEVFQALERLGYRAFRPGQERAIMRILSGISTLLVLPTGAGKSLCYQLPALLYAQRSPCLTLVVSPLLSLMDDQVSDLPSCLKAACLHSGMTKKQRESVLKKVRAAQVHVLIVSPEALVGCGARGPGSLPQAAQLPPIAFACIDEVHCLSQWSHNFRPCYLRVCKVLREHMGVRCFLGLTATATRSTARDVAQHLGIAGEFELSGSANIPANLHLSVSMDRDSDQALVTLLQGDRFRTLDSVIIYCTRERIQNGWLALLRTCLSMVGDSRPRGCGPEAIAEAYHAGMSSQERRRVQQAFMRGHLRMVVATVAFGMGLDRPDVRAVLHLGLPPSFESYVQAIGRAGRDGKPAHCHLFMHPQGEDLWELRRHAHADSTDFLAVKRLVQRVFPPCTCSQRPVSKSSPEEVKEHSGQQTYPVLGQACLGHERALPVQSTVQALDMTEEAIETLLCYLELHPRHWLELLPWTYAQCHLHCLGGSAQLQALAHRCPPLAACQAKWPPKDTSQGRSSLEFGVVELADSMGWKLASVRQALHQLKWDPEPKKGAAQGTGVLVKFSELAFHLHSRGDLTDEEKDQICDFLYNRVQAREHKALAHLHQMSKAFRSVAFPSCGPCLEQSNEEHSNQVKTLVSYYFEEEEEEEETMTDTQGPKPGQTQLQDWEDQIRRDVRQLLSLRPEERFSGRAVARIFHGIASPCYPAQVYGLDRRFWRKYLHLDFHALMHLATEELLLRGR</sequence>
<name>RECQ4_MOUSE</name>
<organism>
    <name type="scientific">Mus musculus</name>
    <name type="common">Mouse</name>
    <dbReference type="NCBI Taxonomy" id="10090"/>
    <lineage>
        <taxon>Eukaryota</taxon>
        <taxon>Metazoa</taxon>
        <taxon>Chordata</taxon>
        <taxon>Craniata</taxon>
        <taxon>Vertebrata</taxon>
        <taxon>Euteleostomi</taxon>
        <taxon>Mammalia</taxon>
        <taxon>Eutheria</taxon>
        <taxon>Euarchontoglires</taxon>
        <taxon>Glires</taxon>
        <taxon>Rodentia</taxon>
        <taxon>Myomorpha</taxon>
        <taxon>Muroidea</taxon>
        <taxon>Muridae</taxon>
        <taxon>Murinae</taxon>
        <taxon>Mus</taxon>
        <taxon>Mus</taxon>
    </lineage>
</organism>
<protein>
    <recommendedName>
        <fullName>ATP-dependent DNA helicase Q4</fullName>
        <ecNumber evidence="2">5.6.2.4</ecNumber>
    </recommendedName>
    <alternativeName>
        <fullName evidence="11">DNA 3'-5' helicase RecQ4</fullName>
    </alternativeName>
    <alternativeName>
        <fullName>DNA helicase, RecQ-like type 4</fullName>
        <shortName>RecQ4</shortName>
    </alternativeName>
    <alternativeName>
        <fullName>RecQ protein-like 4</fullName>
    </alternativeName>
</protein>
<keyword id="KW-0025">Alternative splicing</keyword>
<keyword id="KW-0067">ATP-binding</keyword>
<keyword id="KW-0963">Cytoplasm</keyword>
<keyword id="KW-0238">DNA-binding</keyword>
<keyword id="KW-0347">Helicase</keyword>
<keyword id="KW-0378">Hydrolase</keyword>
<keyword id="KW-0413">Isomerase</keyword>
<keyword id="KW-0479">Metal-binding</keyword>
<keyword id="KW-0547">Nucleotide-binding</keyword>
<keyword id="KW-0539">Nucleus</keyword>
<keyword id="KW-0597">Phosphoprotein</keyword>
<keyword id="KW-1185">Reference proteome</keyword>
<keyword id="KW-0862">Zinc</keyword>
<keyword id="KW-0863">Zinc-finger</keyword>
<feature type="chain" id="PRO_0000205054" description="ATP-dependent DNA helicase Q4">
    <location>
        <begin position="1"/>
        <end position="1216"/>
    </location>
</feature>
<feature type="domain" description="Helicase ATP-binding" evidence="4">
    <location>
        <begin position="506"/>
        <end position="684"/>
    </location>
</feature>
<feature type="domain" description="Helicase C-terminal" evidence="5">
    <location>
        <begin position="705"/>
        <end position="872"/>
    </location>
</feature>
<feature type="zinc finger region" description="CCHC-type" evidence="3">
    <location>
        <begin position="393"/>
        <end position="410"/>
    </location>
</feature>
<feature type="region of interest" description="Disordered" evidence="6">
    <location>
        <begin position="72"/>
        <end position="100"/>
    </location>
</feature>
<feature type="region of interest" description="Disordered" evidence="6">
    <location>
        <begin position="113"/>
        <end position="171"/>
    </location>
</feature>
<feature type="region of interest" description="Disordered" evidence="6">
    <location>
        <begin position="235"/>
        <end position="340"/>
    </location>
</feature>
<feature type="region of interest" description="Disordered" evidence="6">
    <location>
        <begin position="436"/>
        <end position="458"/>
    </location>
</feature>
<feature type="short sequence motif" description="DEAH box">
    <location>
        <begin position="627"/>
        <end position="630"/>
    </location>
</feature>
<feature type="compositionally biased region" description="Polar residues" evidence="6">
    <location>
        <begin position="86"/>
        <end position="100"/>
    </location>
</feature>
<feature type="compositionally biased region" description="Polar residues" evidence="6">
    <location>
        <begin position="114"/>
        <end position="137"/>
    </location>
</feature>
<feature type="compositionally biased region" description="Polar residues" evidence="6">
    <location>
        <begin position="248"/>
        <end position="262"/>
    </location>
</feature>
<feature type="compositionally biased region" description="Polar residues" evidence="6">
    <location>
        <begin position="306"/>
        <end position="320"/>
    </location>
</feature>
<feature type="binding site" evidence="4">
    <location>
        <begin position="519"/>
        <end position="526"/>
    </location>
    <ligand>
        <name>ATP</name>
        <dbReference type="ChEBI" id="CHEBI:30616"/>
    </ligand>
</feature>
<feature type="binding site" evidence="2">
    <location>
        <position position="875"/>
    </location>
    <ligand>
        <name>Zn(2+)</name>
        <dbReference type="ChEBI" id="CHEBI:29105"/>
    </ligand>
</feature>
<feature type="binding site" evidence="2">
    <location>
        <position position="877"/>
    </location>
    <ligand>
        <name>Zn(2+)</name>
        <dbReference type="ChEBI" id="CHEBI:29105"/>
    </ligand>
</feature>
<feature type="binding site" evidence="2">
    <location>
        <position position="906"/>
    </location>
    <ligand>
        <name>Zn(2+)</name>
        <dbReference type="ChEBI" id="CHEBI:29105"/>
    </ligand>
</feature>
<feature type="binding site" evidence="2">
    <location>
        <position position="909"/>
    </location>
    <ligand>
        <name>Zn(2+)</name>
        <dbReference type="ChEBI" id="CHEBI:29105"/>
    </ligand>
</feature>
<feature type="modified residue" description="Phosphoserine" evidence="2">
    <location>
        <position position="179"/>
    </location>
</feature>
<feature type="modified residue" description="Phosphoserine" evidence="2">
    <location>
        <position position="181"/>
    </location>
</feature>
<feature type="splice variant" id="VSP_015177" description="In isoform 2." evidence="10">
    <original>Q</original>
    <variation>QVGSPISPDQDRPRGSTIPRPLQPQLLSCLPVSCRPGPKCGSSVHMTVPMQ</variation>
    <location>
        <position position="843"/>
    </location>
</feature>
<feature type="sequence conflict" description="In Ref. 1; BAD14289." evidence="11" ref="1">
    <original>ERIQNGWL</original>
    <variation>RKDTERVA</variation>
    <location>
        <begin position="732"/>
        <end position="739"/>
    </location>
</feature>
<feature type="sequence conflict" description="In Ref. 1; BAD11131." evidence="11" ref="1">
    <original>S</original>
    <variation>G</variation>
    <location>
        <position position="878"/>
    </location>
</feature>
<feature type="sequence conflict" description="In Ref. 1; BAD11131." evidence="11" ref="1">
    <original>I</original>
    <variation>T</variation>
    <location>
        <position position="929"/>
    </location>
</feature>
<feature type="sequence conflict" description="In Ref. 1; BAD11131." evidence="11" ref="1">
    <original>E</original>
    <variation>TK</variation>
    <location>
        <position position="937"/>
    </location>
</feature>
<feature type="sequence conflict" description="In Ref. 1; BAD11131." evidence="11" ref="1">
    <original>T</original>
    <variation>D</variation>
    <location>
        <position position="1111"/>
    </location>
</feature>
<accession>Q75NR7</accession>
<accession>Q76MT1</accession>
<accession>Q99PV9</accession>
<evidence type="ECO:0000250" key="1"/>
<evidence type="ECO:0000250" key="2">
    <source>
        <dbReference type="UniProtKB" id="O94761"/>
    </source>
</evidence>
<evidence type="ECO:0000255" key="3">
    <source>
        <dbReference type="PROSITE-ProRule" id="PRU00047"/>
    </source>
</evidence>
<evidence type="ECO:0000255" key="4">
    <source>
        <dbReference type="PROSITE-ProRule" id="PRU00541"/>
    </source>
</evidence>
<evidence type="ECO:0000255" key="5">
    <source>
        <dbReference type="PROSITE-ProRule" id="PRU00542"/>
    </source>
</evidence>
<evidence type="ECO:0000256" key="6">
    <source>
        <dbReference type="SAM" id="MobiDB-lite"/>
    </source>
</evidence>
<evidence type="ECO:0000269" key="7">
    <source>
    </source>
</evidence>
<evidence type="ECO:0000269" key="8">
    <source>
    </source>
</evidence>
<evidence type="ECO:0000269" key="9">
    <source>
    </source>
</evidence>
<evidence type="ECO:0000303" key="10">
    <source>
    </source>
</evidence>
<evidence type="ECO:0000305" key="11"/>
<comment type="function">
    <text evidence="2 7 9">An ATP-dependent DNA helicase which unwinds dsDNA with a 3'-overhang in a 3'-5' direction (By similarity). May play a role in development of the palate and the limbs. May modulate chromosome segregation.</text>
</comment>
<comment type="catalytic activity">
    <reaction evidence="2">
        <text>Couples ATP hydrolysis with the unwinding of duplex DNA by translocating in the 3'-5' direction.</text>
        <dbReference type="EC" id="5.6.2.4"/>
    </reaction>
</comment>
<comment type="catalytic activity">
    <reaction>
        <text>ATP + H2O = ADP + phosphate + H(+)</text>
        <dbReference type="Rhea" id="RHEA:13065"/>
        <dbReference type="ChEBI" id="CHEBI:15377"/>
        <dbReference type="ChEBI" id="CHEBI:15378"/>
        <dbReference type="ChEBI" id="CHEBI:30616"/>
        <dbReference type="ChEBI" id="CHEBI:43474"/>
        <dbReference type="ChEBI" id="CHEBI:456216"/>
    </reaction>
</comment>
<comment type="cofactor">
    <cofactor evidence="2">
        <name>Zn(2+)</name>
        <dbReference type="ChEBI" id="CHEBI:29105"/>
    </cofactor>
    <text evidence="2">Binds a Zn(2+) ion per subunit.</text>
</comment>
<comment type="subunit">
    <text evidence="1 2">Interacts with UBR1 and UBR2. Interacts with MCM10; this interaction regulates RECQL4 unwinding activity. Interacts with TOPBP1 (By similarity).</text>
</comment>
<comment type="subcellular location">
    <subcellularLocation>
        <location evidence="2">Cytoplasm</location>
    </subcellularLocation>
    <subcellularLocation>
        <location evidence="2">Nucleus</location>
    </subcellularLocation>
</comment>
<comment type="alternative products">
    <event type="alternative splicing"/>
    <isoform>
        <id>Q75NR7-1</id>
        <name>1</name>
        <sequence type="displayed"/>
    </isoform>
    <isoform>
        <id>Q75NR7-2</id>
        <name>2</name>
        <sequence type="described" ref="VSP_015177"/>
    </isoform>
</comment>
<comment type="developmental stage">
    <text evidence="8">Not expressed at 12.5 dpc. Expressed at 15.5 dpc-18.5 dpc, with highest levels in chondrocytes of developing bone and cartilage and immature proliferating enterocytes of intestine.</text>
</comment>
<comment type="disruption phenotype">
    <text evidence="7 9">Early embryonic lethality. Transgenic mice with exon 13-deleted RECQL4 are severely growth-retarded and show high (95%) perinatal lethality. They exhibit various skin, bone, intestine, tooth and thymus abnormalities and premature aging features, but have normal sensitivity to IR and UV irradiation. In contrast, transgenic mice expressing a truncated form of RECQL4 exhibit mild perinatal lethality, no growth defect, but show defects of the skin and skeleton, aneuploidy and increased cancer susceptibility.</text>
</comment>
<comment type="similarity">
    <text evidence="11">Belongs to the helicase family. RecQ subfamily.</text>
</comment>
<gene>
    <name type="primary">Recql4</name>
    <name type="synonym">Recq4</name>
</gene>
<dbReference type="EC" id="5.6.2.4" evidence="2"/>
<dbReference type="EMBL" id="AB039882">
    <property type="protein sequence ID" value="BAD11131.1"/>
    <property type="molecule type" value="mRNA"/>
</dbReference>
<dbReference type="EMBL" id="AB175741">
    <property type="protein sequence ID" value="BAD14289.1"/>
    <property type="molecule type" value="mRNA"/>
</dbReference>
<dbReference type="EMBL" id="AB042529">
    <property type="protein sequence ID" value="BAB32696.1"/>
    <property type="molecule type" value="Genomic_DNA"/>
</dbReference>
<dbReference type="CCDS" id="CCDS27588.1">
    <molecule id="Q75NR7-1"/>
</dbReference>
<dbReference type="RefSeq" id="NP_478121.2">
    <property type="nucleotide sequence ID" value="NM_058214.3"/>
</dbReference>
<dbReference type="SMR" id="Q75NR7"/>
<dbReference type="BioGRID" id="219759">
    <property type="interactions" value="9"/>
</dbReference>
<dbReference type="FunCoup" id="Q75NR7">
    <property type="interactions" value="2009"/>
</dbReference>
<dbReference type="IntAct" id="Q75NR7">
    <property type="interactions" value="9"/>
</dbReference>
<dbReference type="STRING" id="10090.ENSMUSP00000044363"/>
<dbReference type="GlyGen" id="Q75NR7">
    <property type="glycosylation" value="1 site"/>
</dbReference>
<dbReference type="iPTMnet" id="Q75NR7"/>
<dbReference type="PhosphoSitePlus" id="Q75NR7"/>
<dbReference type="jPOST" id="Q75NR7"/>
<dbReference type="PaxDb" id="10090-ENSMUSP00000044363"/>
<dbReference type="PeptideAtlas" id="Q75NR7"/>
<dbReference type="ProteomicsDB" id="255278">
    <molecule id="Q75NR7-1"/>
</dbReference>
<dbReference type="ProteomicsDB" id="255279">
    <molecule id="Q75NR7-2"/>
</dbReference>
<dbReference type="Pumba" id="Q75NR7"/>
<dbReference type="DNASU" id="79456"/>
<dbReference type="GeneID" id="79456"/>
<dbReference type="KEGG" id="mmu:79456"/>
<dbReference type="UCSC" id="uc007wlv.2">
    <molecule id="Q75NR7-2"/>
    <property type="organism name" value="mouse"/>
</dbReference>
<dbReference type="AGR" id="MGI:1931028"/>
<dbReference type="CTD" id="9401"/>
<dbReference type="MGI" id="MGI:1931028">
    <property type="gene designation" value="Recql4"/>
</dbReference>
<dbReference type="eggNOG" id="KOG0351">
    <property type="taxonomic scope" value="Eukaryota"/>
</dbReference>
<dbReference type="InParanoid" id="Q75NR7"/>
<dbReference type="OrthoDB" id="18781at2759"/>
<dbReference type="PhylomeDB" id="Q75NR7"/>
<dbReference type="TreeFam" id="TF324150"/>
<dbReference type="BRENDA" id="3.6.4.12">
    <property type="organism ID" value="3474"/>
</dbReference>
<dbReference type="BioGRID-ORCS" id="79456">
    <property type="hits" value="23 hits in 116 CRISPR screens"/>
</dbReference>
<dbReference type="ChiTaRS" id="Recql4">
    <property type="organism name" value="mouse"/>
</dbReference>
<dbReference type="PRO" id="PR:Q75NR7"/>
<dbReference type="Proteomes" id="UP000000589">
    <property type="component" value="Unplaced"/>
</dbReference>
<dbReference type="RNAct" id="Q75NR7">
    <property type="molecule type" value="protein"/>
</dbReference>
<dbReference type="GO" id="GO:0005737">
    <property type="term" value="C:cytoplasm"/>
    <property type="evidence" value="ECO:0007669"/>
    <property type="project" value="UniProtKB-SubCell"/>
</dbReference>
<dbReference type="GO" id="GO:0005634">
    <property type="term" value="C:nucleus"/>
    <property type="evidence" value="ECO:0007669"/>
    <property type="project" value="UniProtKB-SubCell"/>
</dbReference>
<dbReference type="GO" id="GO:0005524">
    <property type="term" value="F:ATP binding"/>
    <property type="evidence" value="ECO:0007669"/>
    <property type="project" value="UniProtKB-KW"/>
</dbReference>
<dbReference type="GO" id="GO:0016887">
    <property type="term" value="F:ATP hydrolysis activity"/>
    <property type="evidence" value="ECO:0007669"/>
    <property type="project" value="RHEA"/>
</dbReference>
<dbReference type="GO" id="GO:0003677">
    <property type="term" value="F:DNA binding"/>
    <property type="evidence" value="ECO:0007669"/>
    <property type="project" value="UniProtKB-KW"/>
</dbReference>
<dbReference type="GO" id="GO:0004386">
    <property type="term" value="F:helicase activity"/>
    <property type="evidence" value="ECO:0007669"/>
    <property type="project" value="UniProtKB-KW"/>
</dbReference>
<dbReference type="GO" id="GO:0008270">
    <property type="term" value="F:zinc ion binding"/>
    <property type="evidence" value="ECO:0007669"/>
    <property type="project" value="UniProtKB-KW"/>
</dbReference>
<dbReference type="GO" id="GO:0006310">
    <property type="term" value="P:DNA recombination"/>
    <property type="evidence" value="ECO:0007669"/>
    <property type="project" value="InterPro"/>
</dbReference>
<dbReference type="GO" id="GO:0006260">
    <property type="term" value="P:DNA replication"/>
    <property type="evidence" value="ECO:0007669"/>
    <property type="project" value="InterPro"/>
</dbReference>
<dbReference type="GO" id="GO:0045875">
    <property type="term" value="P:negative regulation of sister chromatid cohesion"/>
    <property type="evidence" value="ECO:0000315"/>
    <property type="project" value="MGI"/>
</dbReference>
<dbReference type="GO" id="GO:0043473">
    <property type="term" value="P:pigmentation"/>
    <property type="evidence" value="ECO:0000315"/>
    <property type="project" value="MGI"/>
</dbReference>
<dbReference type="GO" id="GO:0008284">
    <property type="term" value="P:positive regulation of cell population proliferation"/>
    <property type="evidence" value="ECO:0000315"/>
    <property type="project" value="MGI"/>
</dbReference>
<dbReference type="GO" id="GO:0007062">
    <property type="term" value="P:sister chromatid cohesion"/>
    <property type="evidence" value="ECO:0000315"/>
    <property type="project" value="MGI"/>
</dbReference>
<dbReference type="GO" id="GO:0001501">
    <property type="term" value="P:skeletal system development"/>
    <property type="evidence" value="ECO:0000315"/>
    <property type="project" value="MGI"/>
</dbReference>
<dbReference type="GO" id="GO:0048705">
    <property type="term" value="P:skeletal system morphogenesis"/>
    <property type="evidence" value="ECO:0000315"/>
    <property type="project" value="MGI"/>
</dbReference>
<dbReference type="CDD" id="cd18018">
    <property type="entry name" value="DEXHc_RecQ4-like"/>
    <property type="match status" value="1"/>
</dbReference>
<dbReference type="CDD" id="cd22289">
    <property type="entry name" value="RecQL4_SLD2_NTD"/>
    <property type="match status" value="1"/>
</dbReference>
<dbReference type="FunFam" id="3.40.50.300:FF:000772">
    <property type="entry name" value="ATP-dependent DNA helicase Q4"/>
    <property type="match status" value="1"/>
</dbReference>
<dbReference type="FunFam" id="4.10.60.10:FF:000086">
    <property type="entry name" value="ATP-dependent DNA helicase Q4"/>
    <property type="match status" value="1"/>
</dbReference>
<dbReference type="FunFam" id="1.10.10.1460:FF:000001">
    <property type="entry name" value="DNA replication regulator Sld2"/>
    <property type="match status" value="1"/>
</dbReference>
<dbReference type="Gene3D" id="1.10.10.1460">
    <property type="match status" value="1"/>
</dbReference>
<dbReference type="Gene3D" id="3.40.50.300">
    <property type="entry name" value="P-loop containing nucleotide triphosphate hydrolases"/>
    <property type="match status" value="2"/>
</dbReference>
<dbReference type="Gene3D" id="4.10.60.10">
    <property type="entry name" value="Zinc finger, CCHC-type"/>
    <property type="match status" value="1"/>
</dbReference>
<dbReference type="InterPro" id="IPR011545">
    <property type="entry name" value="DEAD/DEAH_box_helicase_dom"/>
</dbReference>
<dbReference type="InterPro" id="IPR004589">
    <property type="entry name" value="DNA_helicase_ATP-dep_RecQ"/>
</dbReference>
<dbReference type="InterPro" id="IPR021110">
    <property type="entry name" value="DNA_rep_checkpnt_protein"/>
</dbReference>
<dbReference type="InterPro" id="IPR014001">
    <property type="entry name" value="Helicase_ATP-bd"/>
</dbReference>
<dbReference type="InterPro" id="IPR001650">
    <property type="entry name" value="Helicase_C-like"/>
</dbReference>
<dbReference type="InterPro" id="IPR027417">
    <property type="entry name" value="P-loop_NTPase"/>
</dbReference>
<dbReference type="InterPro" id="IPR001878">
    <property type="entry name" value="Znf_CCHC"/>
</dbReference>
<dbReference type="InterPro" id="IPR036875">
    <property type="entry name" value="Znf_CCHC_sf"/>
</dbReference>
<dbReference type="NCBIfam" id="TIGR00614">
    <property type="entry name" value="recQ_fam"/>
    <property type="match status" value="1"/>
</dbReference>
<dbReference type="PANTHER" id="PTHR13710:SF108">
    <property type="entry name" value="ATP-DEPENDENT DNA HELICASE Q4"/>
    <property type="match status" value="1"/>
</dbReference>
<dbReference type="PANTHER" id="PTHR13710">
    <property type="entry name" value="DNA HELICASE RECQ FAMILY MEMBER"/>
    <property type="match status" value="1"/>
</dbReference>
<dbReference type="Pfam" id="PF00270">
    <property type="entry name" value="DEAD"/>
    <property type="match status" value="1"/>
</dbReference>
<dbReference type="Pfam" id="PF11719">
    <property type="entry name" value="Drc1-Sld2"/>
    <property type="match status" value="1"/>
</dbReference>
<dbReference type="Pfam" id="PF00271">
    <property type="entry name" value="Helicase_C"/>
    <property type="match status" value="1"/>
</dbReference>
<dbReference type="Pfam" id="PF00098">
    <property type="entry name" value="zf-CCHC"/>
    <property type="match status" value="1"/>
</dbReference>
<dbReference type="SMART" id="SM00487">
    <property type="entry name" value="DEXDc"/>
    <property type="match status" value="1"/>
</dbReference>
<dbReference type="SMART" id="SM00490">
    <property type="entry name" value="HELICc"/>
    <property type="match status" value="1"/>
</dbReference>
<dbReference type="SMART" id="SM00343">
    <property type="entry name" value="ZnF_C2HC"/>
    <property type="match status" value="1"/>
</dbReference>
<dbReference type="SUPFAM" id="SSF52540">
    <property type="entry name" value="P-loop containing nucleoside triphosphate hydrolases"/>
    <property type="match status" value="1"/>
</dbReference>
<dbReference type="SUPFAM" id="SSF57756">
    <property type="entry name" value="Retrovirus zinc finger-like domains"/>
    <property type="match status" value="1"/>
</dbReference>
<dbReference type="PROSITE" id="PS51192">
    <property type="entry name" value="HELICASE_ATP_BIND_1"/>
    <property type="match status" value="1"/>
</dbReference>
<dbReference type="PROSITE" id="PS51194">
    <property type="entry name" value="HELICASE_CTER"/>
    <property type="match status" value="1"/>
</dbReference>
<dbReference type="PROSITE" id="PS50158">
    <property type="entry name" value="ZF_CCHC"/>
    <property type="match status" value="1"/>
</dbReference>
<reference key="1">
    <citation type="journal article" date="2000" name="Gene">
        <title>Cloning, genomic structure and chromosomal localization of the gene encoding mouse DNA helicase RecQ helicase protein-like 4.</title>
        <authorList>
            <person name="Ohhata T."/>
            <person name="Araki R."/>
            <person name="Fukumura R."/>
            <person name="Kuroiwa A."/>
            <person name="Matsuda Y."/>
            <person name="Tatsumi K."/>
            <person name="Abe M."/>
        </authorList>
    </citation>
    <scope>NUCLEOTIDE SEQUENCE [GENOMIC DNA / MRNA] (ISOFORM 1)</scope>
    <scope>NUCLEOTIDE SEQUENCE [MRNA] OF 16-1115 (ISOFORM 2)</scope>
</reference>
<reference key="2">
    <citation type="journal article" date="2003" name="Hum. Mol. Genet.">
        <title>Growth retardation and skin abnormalities of the Recql4-deficient mouse.</title>
        <authorList>
            <person name="Hoki Y."/>
            <person name="Araki R."/>
            <person name="Fujimori A."/>
            <person name="Ohhata T."/>
            <person name="Koseki H."/>
            <person name="Fukumura R."/>
            <person name="Nakamura M."/>
            <person name="Takahashi H."/>
            <person name="Noda Y."/>
            <person name="Kito S."/>
            <person name="Abe M."/>
        </authorList>
    </citation>
    <scope>FUNCTION</scope>
    <scope>DISRUPTION PHENOTYPE</scope>
</reference>
<reference key="3">
    <citation type="journal article" date="2003" name="Hum. Mol. Genet.">
        <title>Molecular defect of RAPADILINO syndrome expands the phenotype spectrum of RECQL diseases.</title>
        <authorList>
            <person name="Siitonen H.A."/>
            <person name="Kopra O."/>
            <person name="Kaeaeriaeinen H."/>
            <person name="Haravuori H."/>
            <person name="Winter R.M."/>
            <person name="Saeaemaenen A.-M."/>
            <person name="Peltonen L."/>
            <person name="Kestilae M."/>
        </authorList>
    </citation>
    <scope>DEVELOPMENTAL STAGE</scope>
</reference>
<reference key="4">
    <citation type="journal article" date="2005" name="Hum. Mol. Genet.">
        <title>Defective sister-chromatid cohesion, aneuploidy and cancer predisposition in a mouse model of type II Rothmund-Thomson syndrome.</title>
        <authorList>
            <person name="Mann M.B."/>
            <person name="Hodges C.A."/>
            <person name="Barnes E."/>
            <person name="Vogel H."/>
            <person name="Hassold T.J."/>
            <person name="Luo G."/>
        </authorList>
    </citation>
    <scope>FUNCTION</scope>
    <scope>DISRUPTION PHENOTYPE</scope>
</reference>
<proteinExistence type="evidence at transcript level"/>